<keyword id="KW-0021">Allosteric enzyme</keyword>
<keyword id="KW-0067">ATP-binding</keyword>
<keyword id="KW-0963">Cytoplasm</keyword>
<keyword id="KW-0215">Deoxyribonucleotide synthesis</keyword>
<keyword id="KW-1015">Disulfide bond</keyword>
<keyword id="KW-0547">Nucleotide-binding</keyword>
<keyword id="KW-0560">Oxidoreductase</keyword>
<keyword id="KW-1185">Reference proteome</keyword>
<gene>
    <name type="primary">rnrA</name>
    <name type="ORF">DDB_G0284071</name>
</gene>
<comment type="function">
    <text evidence="1">Provides the precursors necessary for DNA synthesis. Catalyzes the biosynthesis of deoxyribonucleotides from the corresponding ribonucleotides (By similarity).</text>
</comment>
<comment type="catalytic activity">
    <reaction>
        <text>a 2'-deoxyribonucleoside 5'-diphosphate + [thioredoxin]-disulfide + H2O = a ribonucleoside 5'-diphosphate + [thioredoxin]-dithiol</text>
        <dbReference type="Rhea" id="RHEA:23252"/>
        <dbReference type="Rhea" id="RHEA-COMP:10698"/>
        <dbReference type="Rhea" id="RHEA-COMP:10700"/>
        <dbReference type="ChEBI" id="CHEBI:15377"/>
        <dbReference type="ChEBI" id="CHEBI:29950"/>
        <dbReference type="ChEBI" id="CHEBI:50058"/>
        <dbReference type="ChEBI" id="CHEBI:57930"/>
        <dbReference type="ChEBI" id="CHEBI:73316"/>
        <dbReference type="EC" id="1.17.4.1"/>
    </reaction>
</comment>
<comment type="activity regulation">
    <text evidence="1">Under complex allosteric control mediated by deoxynucleoside triphosphates and ATP binding to separate specificity and activation sites on the large subunit. The type of nucleotide bound at the specificity site determines substrate preference. It seems probable that ATP makes the enzyme reduce CDP and UDP, dGTP favors ADP reduction and dTTP favors GDP reduction. Stimulated by ATP and inhibited by dATP binding to the activity site (By similarity).</text>
</comment>
<comment type="subunit">
    <text evidence="1">Heterodimer of a large and a small subunit.</text>
</comment>
<comment type="subcellular location">
    <subcellularLocation>
        <location evidence="1">Cytoplasm</location>
    </subcellularLocation>
</comment>
<comment type="similarity">
    <text evidence="5">Belongs to the ribonucleoside diphosphate reductase large chain family.</text>
</comment>
<name>RIR1_DICDI</name>
<reference key="1">
    <citation type="journal article" date="2005" name="Nature">
        <title>The genome of the social amoeba Dictyostelium discoideum.</title>
        <authorList>
            <person name="Eichinger L."/>
            <person name="Pachebat J.A."/>
            <person name="Gloeckner G."/>
            <person name="Rajandream M.A."/>
            <person name="Sucgang R."/>
            <person name="Berriman M."/>
            <person name="Song J."/>
            <person name="Olsen R."/>
            <person name="Szafranski K."/>
            <person name="Xu Q."/>
            <person name="Tunggal B."/>
            <person name="Kummerfeld S."/>
            <person name="Madera M."/>
            <person name="Konfortov B.A."/>
            <person name="Rivero F."/>
            <person name="Bankier A.T."/>
            <person name="Lehmann R."/>
            <person name="Hamlin N."/>
            <person name="Davies R."/>
            <person name="Gaudet P."/>
            <person name="Fey P."/>
            <person name="Pilcher K."/>
            <person name="Chen G."/>
            <person name="Saunders D."/>
            <person name="Sodergren E.J."/>
            <person name="Davis P."/>
            <person name="Kerhornou A."/>
            <person name="Nie X."/>
            <person name="Hall N."/>
            <person name="Anjard C."/>
            <person name="Hemphill L."/>
            <person name="Bason N."/>
            <person name="Farbrother P."/>
            <person name="Desany B."/>
            <person name="Just E."/>
            <person name="Morio T."/>
            <person name="Rost R."/>
            <person name="Churcher C.M."/>
            <person name="Cooper J."/>
            <person name="Haydock S."/>
            <person name="van Driessche N."/>
            <person name="Cronin A."/>
            <person name="Goodhead I."/>
            <person name="Muzny D.M."/>
            <person name="Mourier T."/>
            <person name="Pain A."/>
            <person name="Lu M."/>
            <person name="Harper D."/>
            <person name="Lindsay R."/>
            <person name="Hauser H."/>
            <person name="James K.D."/>
            <person name="Quiles M."/>
            <person name="Madan Babu M."/>
            <person name="Saito T."/>
            <person name="Buchrieser C."/>
            <person name="Wardroper A."/>
            <person name="Felder M."/>
            <person name="Thangavelu M."/>
            <person name="Johnson D."/>
            <person name="Knights A."/>
            <person name="Loulseged H."/>
            <person name="Mungall K.L."/>
            <person name="Oliver K."/>
            <person name="Price C."/>
            <person name="Quail M.A."/>
            <person name="Urushihara H."/>
            <person name="Hernandez J."/>
            <person name="Rabbinowitsch E."/>
            <person name="Steffen D."/>
            <person name="Sanders M."/>
            <person name="Ma J."/>
            <person name="Kohara Y."/>
            <person name="Sharp S."/>
            <person name="Simmonds M.N."/>
            <person name="Spiegler S."/>
            <person name="Tivey A."/>
            <person name="Sugano S."/>
            <person name="White B."/>
            <person name="Walker D."/>
            <person name="Woodward J.R."/>
            <person name="Winckler T."/>
            <person name="Tanaka Y."/>
            <person name="Shaulsky G."/>
            <person name="Schleicher M."/>
            <person name="Weinstock G.M."/>
            <person name="Rosenthal A."/>
            <person name="Cox E.C."/>
            <person name="Chisholm R.L."/>
            <person name="Gibbs R.A."/>
            <person name="Loomis W.F."/>
            <person name="Platzer M."/>
            <person name="Kay R.R."/>
            <person name="Williams J.G."/>
            <person name="Dear P.H."/>
            <person name="Noegel A.A."/>
            <person name="Barrell B.G."/>
            <person name="Kuspa A."/>
        </authorList>
    </citation>
    <scope>NUCLEOTIDE SEQUENCE [LARGE SCALE GENOMIC DNA]</scope>
    <source>
        <strain>AX4</strain>
    </source>
</reference>
<feature type="chain" id="PRO_0000328498" description="Ribonucleoside-diphosphate reductase large subunit">
    <location>
        <begin position="1"/>
        <end position="870"/>
    </location>
</feature>
<feature type="domain" description="ATP-cone" evidence="3">
    <location>
        <begin position="16"/>
        <end position="110"/>
    </location>
</feature>
<feature type="region of interest" description="Disordered" evidence="4">
    <location>
        <begin position="789"/>
        <end position="854"/>
    </location>
</feature>
<feature type="compositionally biased region" description="Low complexity" evidence="4">
    <location>
        <begin position="796"/>
        <end position="811"/>
    </location>
</feature>
<feature type="compositionally biased region" description="Polar residues" evidence="4">
    <location>
        <begin position="812"/>
        <end position="831"/>
    </location>
</feature>
<feature type="compositionally biased region" description="Low complexity" evidence="4">
    <location>
        <begin position="832"/>
        <end position="844"/>
    </location>
</feature>
<feature type="active site" description="Proton acceptor" evidence="1">
    <location>
        <position position="446"/>
    </location>
</feature>
<feature type="active site" description="Cysteine radical intermediate" evidence="1">
    <location>
        <position position="448"/>
    </location>
</feature>
<feature type="active site" description="Proton acceptor" evidence="1">
    <location>
        <position position="450"/>
    </location>
</feature>
<feature type="binding site" evidence="2">
    <location>
        <begin position="20"/>
        <end position="21"/>
    </location>
    <ligand>
        <name>ATP</name>
        <dbReference type="ChEBI" id="CHEBI:30616"/>
        <note>allosteric activator</note>
    </ligand>
</feature>
<feature type="binding site" evidence="2">
    <location>
        <begin position="26"/>
        <end position="32"/>
    </location>
    <ligand>
        <name>ATP</name>
        <dbReference type="ChEBI" id="CHEBI:30616"/>
        <note>allosteric activator</note>
    </ligand>
</feature>
<feature type="binding site" evidence="2">
    <location>
        <position position="71"/>
    </location>
    <ligand>
        <name>ATP</name>
        <dbReference type="ChEBI" id="CHEBI:30616"/>
        <note>allosteric activator</note>
    </ligand>
</feature>
<feature type="binding site" evidence="2">
    <location>
        <position position="75"/>
    </location>
    <ligand>
        <name>ATP</name>
        <dbReference type="ChEBI" id="CHEBI:30616"/>
        <note>allosteric activator</note>
    </ligand>
</feature>
<feature type="binding site" evidence="2">
    <location>
        <position position="235"/>
    </location>
    <ligand>
        <name>GDP</name>
        <dbReference type="ChEBI" id="CHEBI:58189"/>
    </ligand>
</feature>
<feature type="binding site" evidence="2">
    <location>
        <begin position="244"/>
        <end position="246"/>
    </location>
    <ligand>
        <name>dTTP</name>
        <dbReference type="ChEBI" id="CHEBI:37568"/>
        <note>allosteric effector that controls substrate specificity</note>
    </ligand>
</feature>
<feature type="binding site" evidence="2">
    <location>
        <position position="261"/>
    </location>
    <ligand>
        <name>dTTP</name>
        <dbReference type="ChEBI" id="CHEBI:37568"/>
        <note>allosteric effector that controls substrate specificity</note>
    </ligand>
</feature>
<feature type="binding site" evidence="2">
    <location>
        <position position="274"/>
    </location>
    <ligand>
        <name>dTTP</name>
        <dbReference type="ChEBI" id="CHEBI:37568"/>
        <note>allosteric effector that controls substrate specificity</note>
    </ligand>
</feature>
<feature type="binding site" evidence="2">
    <location>
        <begin position="281"/>
        <end position="282"/>
    </location>
    <ligand>
        <name>dTTP</name>
        <dbReference type="ChEBI" id="CHEBI:37568"/>
        <note>allosteric effector that controls substrate specificity</note>
    </ligand>
</feature>
<feature type="binding site" evidence="2">
    <location>
        <position position="446"/>
    </location>
    <ligand>
        <name>GDP</name>
        <dbReference type="ChEBI" id="CHEBI:58189"/>
    </ligand>
</feature>
<feature type="binding site" evidence="2">
    <location>
        <position position="450"/>
    </location>
    <ligand>
        <name>GDP</name>
        <dbReference type="ChEBI" id="CHEBI:58189"/>
    </ligand>
</feature>
<feature type="binding site" evidence="2">
    <location>
        <begin position="632"/>
        <end position="635"/>
    </location>
    <ligand>
        <name>GDP</name>
        <dbReference type="ChEBI" id="CHEBI:58189"/>
    </ligand>
</feature>
<feature type="site" description="Important for hydrogen atom transfer" evidence="1">
    <location>
        <position position="236"/>
    </location>
</feature>
<feature type="site" description="Important for hydrogen atom transfer" evidence="1">
    <location>
        <position position="463"/>
    </location>
</feature>
<feature type="site" description="Important for electron transfer" evidence="1">
    <location>
        <position position="765"/>
    </location>
</feature>
<feature type="site" description="Important for electron transfer" evidence="1">
    <location>
        <position position="766"/>
    </location>
</feature>
<feature type="site" description="Interacts with thioredoxin/glutaredoxin" evidence="1">
    <location>
        <position position="865"/>
    </location>
</feature>
<feature type="site" description="Interacts with thioredoxin/glutaredoxin" evidence="1">
    <location>
        <position position="868"/>
    </location>
</feature>
<feature type="disulfide bond" description="Redox-active" evidence="1">
    <location>
        <begin position="236"/>
        <end position="463"/>
    </location>
</feature>
<proteinExistence type="inferred from homology"/>
<dbReference type="EC" id="1.17.4.1"/>
<dbReference type="EMBL" id="AAFI02000063">
    <property type="protein sequence ID" value="EAL65376.1"/>
    <property type="molecule type" value="Genomic_DNA"/>
</dbReference>
<dbReference type="RefSeq" id="XP_638726.1">
    <property type="nucleotide sequence ID" value="XM_633634.1"/>
</dbReference>
<dbReference type="SMR" id="Q54Q71"/>
<dbReference type="FunCoup" id="Q54Q71">
    <property type="interactions" value="643"/>
</dbReference>
<dbReference type="STRING" id="44689.Q54Q71"/>
<dbReference type="GlyGen" id="Q54Q71">
    <property type="glycosylation" value="1 site"/>
</dbReference>
<dbReference type="PaxDb" id="44689-DDB0230075"/>
<dbReference type="EnsemblProtists" id="EAL65376">
    <property type="protein sequence ID" value="EAL65376"/>
    <property type="gene ID" value="DDB_G0284071"/>
</dbReference>
<dbReference type="GeneID" id="8624396"/>
<dbReference type="KEGG" id="ddi:DDB_G0284071"/>
<dbReference type="dictyBase" id="DDB_G0284071">
    <property type="gene designation" value="rnrA"/>
</dbReference>
<dbReference type="VEuPathDB" id="AmoebaDB:DDB_G0284071"/>
<dbReference type="eggNOG" id="KOG1112">
    <property type="taxonomic scope" value="Eukaryota"/>
</dbReference>
<dbReference type="HOGENOM" id="CLU_000404_1_0_1"/>
<dbReference type="InParanoid" id="Q54Q71"/>
<dbReference type="OMA" id="IELPQHM"/>
<dbReference type="PhylomeDB" id="Q54Q71"/>
<dbReference type="Reactome" id="R-DDI-499943">
    <property type="pathway name" value="Interconversion of nucleotide di- and triphosphates"/>
</dbReference>
<dbReference type="PRO" id="PR:Q54Q71"/>
<dbReference type="Proteomes" id="UP000002195">
    <property type="component" value="Chromosome 4"/>
</dbReference>
<dbReference type="GO" id="GO:0005971">
    <property type="term" value="C:ribonucleoside-diphosphate reductase complex"/>
    <property type="evidence" value="ECO:0000314"/>
    <property type="project" value="dictyBase"/>
</dbReference>
<dbReference type="GO" id="GO:0005524">
    <property type="term" value="F:ATP binding"/>
    <property type="evidence" value="ECO:0000318"/>
    <property type="project" value="GO_Central"/>
</dbReference>
<dbReference type="GO" id="GO:0004748">
    <property type="term" value="F:ribonucleoside-diphosphate reductase activity, thioredoxin disulfide as acceptor"/>
    <property type="evidence" value="ECO:0000314"/>
    <property type="project" value="dictyBase"/>
</dbReference>
<dbReference type="GO" id="GO:0009263">
    <property type="term" value="P:deoxyribonucleotide biosynthetic process"/>
    <property type="evidence" value="ECO:0000314"/>
    <property type="project" value="dictyBase"/>
</dbReference>
<dbReference type="GO" id="GO:0031288">
    <property type="term" value="P:sorocarp morphogenesis"/>
    <property type="evidence" value="ECO:0000315"/>
    <property type="project" value="dictyBase"/>
</dbReference>
<dbReference type="CDD" id="cd01679">
    <property type="entry name" value="RNR_I"/>
    <property type="match status" value="1"/>
</dbReference>
<dbReference type="FunFam" id="3.20.70.20:FF:000010">
    <property type="entry name" value="Ribonucleoside-diphosphate reductase"/>
    <property type="match status" value="1"/>
</dbReference>
<dbReference type="Gene3D" id="3.20.70.20">
    <property type="match status" value="1"/>
</dbReference>
<dbReference type="InterPro" id="IPR005144">
    <property type="entry name" value="ATP-cone_dom"/>
</dbReference>
<dbReference type="InterPro" id="IPR013346">
    <property type="entry name" value="NrdE_NrdA_C"/>
</dbReference>
<dbReference type="InterPro" id="IPR000788">
    <property type="entry name" value="RNR_lg_C"/>
</dbReference>
<dbReference type="InterPro" id="IPR013509">
    <property type="entry name" value="RNR_lsu_N"/>
</dbReference>
<dbReference type="InterPro" id="IPR008926">
    <property type="entry name" value="RNR_R1-su_N"/>
</dbReference>
<dbReference type="InterPro" id="IPR039718">
    <property type="entry name" value="Rrm1"/>
</dbReference>
<dbReference type="NCBIfam" id="TIGR02506">
    <property type="entry name" value="NrdE_NrdA"/>
    <property type="match status" value="1"/>
</dbReference>
<dbReference type="PANTHER" id="PTHR11573">
    <property type="entry name" value="RIBONUCLEOSIDE-DIPHOSPHATE REDUCTASE LARGE CHAIN"/>
    <property type="match status" value="1"/>
</dbReference>
<dbReference type="PANTHER" id="PTHR11573:SF6">
    <property type="entry name" value="RIBONUCLEOSIDE-DIPHOSPHATE REDUCTASE LARGE SUBUNIT"/>
    <property type="match status" value="1"/>
</dbReference>
<dbReference type="Pfam" id="PF03477">
    <property type="entry name" value="ATP-cone"/>
    <property type="match status" value="1"/>
</dbReference>
<dbReference type="Pfam" id="PF02867">
    <property type="entry name" value="Ribonuc_red_lgC"/>
    <property type="match status" value="1"/>
</dbReference>
<dbReference type="Pfam" id="PF00317">
    <property type="entry name" value="Ribonuc_red_lgN"/>
    <property type="match status" value="1"/>
</dbReference>
<dbReference type="PRINTS" id="PR01183">
    <property type="entry name" value="RIBORDTASEM1"/>
</dbReference>
<dbReference type="SUPFAM" id="SSF51998">
    <property type="entry name" value="PFL-like glycyl radical enzymes"/>
    <property type="match status" value="1"/>
</dbReference>
<dbReference type="SUPFAM" id="SSF48168">
    <property type="entry name" value="R1 subunit of ribonucleotide reductase, N-terminal domain"/>
    <property type="match status" value="1"/>
</dbReference>
<dbReference type="PROSITE" id="PS51161">
    <property type="entry name" value="ATP_CONE"/>
    <property type="match status" value="1"/>
</dbReference>
<organism>
    <name type="scientific">Dictyostelium discoideum</name>
    <name type="common">Social amoeba</name>
    <dbReference type="NCBI Taxonomy" id="44689"/>
    <lineage>
        <taxon>Eukaryota</taxon>
        <taxon>Amoebozoa</taxon>
        <taxon>Evosea</taxon>
        <taxon>Eumycetozoa</taxon>
        <taxon>Dictyostelia</taxon>
        <taxon>Dictyosteliales</taxon>
        <taxon>Dictyosteliaceae</taxon>
        <taxon>Dictyostelium</taxon>
    </lineage>
</organism>
<protein>
    <recommendedName>
        <fullName>Ribonucleoside-diphosphate reductase large subunit</fullName>
        <ecNumber>1.17.4.1</ecNumber>
    </recommendedName>
    <alternativeName>
        <fullName>Ribonucleotide reductase large subunit</fullName>
    </alternativeName>
</protein>
<sequence length="870" mass="98019">MISNSINVTPNKESKMYVVKRDGTKENVSFDKITSRISFLCEMEPKLNSDIVDPIEVAQKVVSGVFPGVKTTELDNLAAETAAYMSTRHPDYGILAARISVSNLHKQTSKSFVETVKKQYEFINPKSNLLAPLVSKELYEIVMKHGERLESVIDYYRDFDYDFFGFKTLERSYLHRINGKIVERPQHMLMRVSIGIHGEDLESAINTYKRLSEKLFTHATPTLFNAGTPSPQMSSCFLVQMKEDSIDGIYDTLKQCALISKSAGGIGIAVHKIRAAQSYIRGTNGTSNGLVPMLRVFNDTARYVDQGGGKRKGAFAVYLEPWHADVFEFIDLKKNTGKEEMRARDLFYALWVSDIFMERVEQNGDWALFCPNEAPGLAETHSEEHRALYLKYEATPDLPRRVIKAQELWFAIMESQVETGTPFILYKDACNAKSNQKNLGTISSSNLCTEIIQYTSPDEIAVCNLASIALPKFVRQKVGSTDPKEKEFDHQFLFEITKLITVNLNVIIDRNYYPVAEAKTSNLRHRPIGIGIQGLADVFIKMRMPFDSVAAAKLNVEIAETIYFAALTASHELAIRDGTYESFKGSPASKGILQFDMWNVTPSSRWNWAELKDNIVNKGGLRNSLLIAPMPTASTSQILGNNECFEPYTSNIYSRRVLAGEFTIVNKQLLEDLMELGIWSPEMKNQIVAARGSIQSIGGIPDDLKELYKTVWEIRQRTLIDMAADRGAFIDQSQSFNVFIAEPTFAKLTSMHFYSWKKGLKTGMYYLRTRPAADAIQFTVDPIVSQTPKPVENNINSTTPLKTPTKTPNSSNRISTSPTNNLTSPIRFNITQQQQQQQQQQQQQNNNEDDLANYDGMTCRREEGCLVCGS</sequence>
<evidence type="ECO:0000250" key="1"/>
<evidence type="ECO:0000250" key="2">
    <source>
        <dbReference type="UniProtKB" id="P23921"/>
    </source>
</evidence>
<evidence type="ECO:0000255" key="3">
    <source>
        <dbReference type="PROSITE-ProRule" id="PRU00492"/>
    </source>
</evidence>
<evidence type="ECO:0000256" key="4">
    <source>
        <dbReference type="SAM" id="MobiDB-lite"/>
    </source>
</evidence>
<evidence type="ECO:0000305" key="5"/>
<accession>Q54Q71</accession>